<proteinExistence type="inferred from homology"/>
<evidence type="ECO:0000255" key="1">
    <source>
        <dbReference type="HAMAP-Rule" id="MF_00120"/>
    </source>
</evidence>
<comment type="function">
    <text evidence="1">Allows the formation of correctly charged Gln-tRNA(Gln) through the transamidation of misacylated Glu-tRNA(Gln) in organisms which lack glutaminyl-tRNA synthetase. The reaction takes place in the presence of glutamine and ATP through an activated gamma-phospho-Glu-tRNA(Gln).</text>
</comment>
<comment type="catalytic activity">
    <reaction evidence="1">
        <text>L-glutamyl-tRNA(Gln) + L-glutamine + ATP + H2O = L-glutaminyl-tRNA(Gln) + L-glutamate + ADP + phosphate + H(+)</text>
        <dbReference type="Rhea" id="RHEA:17521"/>
        <dbReference type="Rhea" id="RHEA-COMP:9681"/>
        <dbReference type="Rhea" id="RHEA-COMP:9684"/>
        <dbReference type="ChEBI" id="CHEBI:15377"/>
        <dbReference type="ChEBI" id="CHEBI:15378"/>
        <dbReference type="ChEBI" id="CHEBI:29985"/>
        <dbReference type="ChEBI" id="CHEBI:30616"/>
        <dbReference type="ChEBI" id="CHEBI:43474"/>
        <dbReference type="ChEBI" id="CHEBI:58359"/>
        <dbReference type="ChEBI" id="CHEBI:78520"/>
        <dbReference type="ChEBI" id="CHEBI:78521"/>
        <dbReference type="ChEBI" id="CHEBI:456216"/>
        <dbReference type="EC" id="6.3.5.7"/>
    </reaction>
</comment>
<comment type="subunit">
    <text evidence="1">Heterotrimer of A, B and C subunits.</text>
</comment>
<comment type="similarity">
    <text evidence="1">Belongs to the amidase family. GatA subfamily.</text>
</comment>
<keyword id="KW-0067">ATP-binding</keyword>
<keyword id="KW-0436">Ligase</keyword>
<keyword id="KW-0547">Nucleotide-binding</keyword>
<keyword id="KW-0648">Protein biosynthesis</keyword>
<accession>C4L690</accession>
<gene>
    <name evidence="1" type="primary">gatA</name>
    <name type="ordered locus">EAT1b_0993</name>
</gene>
<protein>
    <recommendedName>
        <fullName evidence="1">Glutamyl-tRNA(Gln) amidotransferase subunit A</fullName>
        <shortName evidence="1">Glu-ADT subunit A</shortName>
        <ecNumber evidence="1">6.3.5.7</ecNumber>
    </recommendedName>
</protein>
<sequence length="480" mass="51829">MSLFDHGVAKLHTLLKEGEVTVTDLVKESFDRIEATDDQIGAFLTLNEDAFEQAKRMDELAKMSDNPLFGMPIGVKDNIVTKGMRTTCASTFLENFVPAHDATVVERLHDAGALTIGKLNMDEFAMGSSNENSAFKPVRNPWDPTRVPGGSSGGSAASVAAGQVLFSLGSDTGGSIRQPAAYCGVVGMKPTYGLVSRFGLVAFASSLDQIGPLTRTVEDNAYLLNTIAGHCDMDSTSAEVEVPDYTAALNQDLTGMKFALPEEFMAEGVAPGVREQIEKAIETLKSLGATIETVSIPSVKYALSAYYLLASSEASSNLARFDGIRYGRRAEADTLDEVFTYSREQGFGDEVKRRIMLGTYALSSGYYDAFYKKAQQVRTLMKQDFAKVFEEYDAIVGPTAPTTAFKLGEQLDDPLTMYANDIMTIPVNLVGIPAISVPAGLSEGLPVGLQIIGNYFDESTLYRVAHAFEQANGGFKMPQL</sequence>
<reference key="1">
    <citation type="journal article" date="2011" name="J. Bacteriol.">
        <title>Complete genome sequence of the Thermophilic Bacterium Exiguobacterium sp. AT1b.</title>
        <authorList>
            <person name="Vishnivetskaya T.A."/>
            <person name="Lucas S."/>
            <person name="Copeland A."/>
            <person name="Lapidus A."/>
            <person name="Glavina del Rio T."/>
            <person name="Dalin E."/>
            <person name="Tice H."/>
            <person name="Bruce D.C."/>
            <person name="Goodwin L.A."/>
            <person name="Pitluck S."/>
            <person name="Saunders E."/>
            <person name="Brettin T."/>
            <person name="Detter C."/>
            <person name="Han C."/>
            <person name="Larimer F."/>
            <person name="Land M.L."/>
            <person name="Hauser L.J."/>
            <person name="Kyrpides N.C."/>
            <person name="Ovchinnikova G."/>
            <person name="Kathariou S."/>
            <person name="Ramaley R.F."/>
            <person name="Rodrigues D.F."/>
            <person name="Hendrix C."/>
            <person name="Richardson P."/>
            <person name="Tiedje J.M."/>
        </authorList>
    </citation>
    <scope>NUCLEOTIDE SEQUENCE [LARGE SCALE GENOMIC DNA]</scope>
    <source>
        <strain>ATCC BAA-1283 / AT1b</strain>
    </source>
</reference>
<name>GATA_EXISA</name>
<dbReference type="EC" id="6.3.5.7" evidence="1"/>
<dbReference type="EMBL" id="CP001615">
    <property type="protein sequence ID" value="ACQ69921.1"/>
    <property type="molecule type" value="Genomic_DNA"/>
</dbReference>
<dbReference type="RefSeq" id="WP_012727040.1">
    <property type="nucleotide sequence ID" value="NC_012673.1"/>
</dbReference>
<dbReference type="SMR" id="C4L690"/>
<dbReference type="STRING" id="360911.EAT1b_0993"/>
<dbReference type="KEGG" id="eat:EAT1b_0993"/>
<dbReference type="eggNOG" id="COG0154">
    <property type="taxonomic scope" value="Bacteria"/>
</dbReference>
<dbReference type="HOGENOM" id="CLU_009600_0_3_9"/>
<dbReference type="OrthoDB" id="9811471at2"/>
<dbReference type="Proteomes" id="UP000000716">
    <property type="component" value="Chromosome"/>
</dbReference>
<dbReference type="GO" id="GO:0030956">
    <property type="term" value="C:glutamyl-tRNA(Gln) amidotransferase complex"/>
    <property type="evidence" value="ECO:0007669"/>
    <property type="project" value="InterPro"/>
</dbReference>
<dbReference type="GO" id="GO:0005524">
    <property type="term" value="F:ATP binding"/>
    <property type="evidence" value="ECO:0007669"/>
    <property type="project" value="UniProtKB-KW"/>
</dbReference>
<dbReference type="GO" id="GO:0050567">
    <property type="term" value="F:glutaminyl-tRNA synthase (glutamine-hydrolyzing) activity"/>
    <property type="evidence" value="ECO:0007669"/>
    <property type="project" value="UniProtKB-UniRule"/>
</dbReference>
<dbReference type="GO" id="GO:0006412">
    <property type="term" value="P:translation"/>
    <property type="evidence" value="ECO:0007669"/>
    <property type="project" value="UniProtKB-UniRule"/>
</dbReference>
<dbReference type="Gene3D" id="3.90.1300.10">
    <property type="entry name" value="Amidase signature (AS) domain"/>
    <property type="match status" value="1"/>
</dbReference>
<dbReference type="HAMAP" id="MF_00120">
    <property type="entry name" value="GatA"/>
    <property type="match status" value="1"/>
</dbReference>
<dbReference type="InterPro" id="IPR000120">
    <property type="entry name" value="Amidase"/>
</dbReference>
<dbReference type="InterPro" id="IPR020556">
    <property type="entry name" value="Amidase_CS"/>
</dbReference>
<dbReference type="InterPro" id="IPR023631">
    <property type="entry name" value="Amidase_dom"/>
</dbReference>
<dbReference type="InterPro" id="IPR036928">
    <property type="entry name" value="AS_sf"/>
</dbReference>
<dbReference type="InterPro" id="IPR004412">
    <property type="entry name" value="GatA"/>
</dbReference>
<dbReference type="NCBIfam" id="TIGR00132">
    <property type="entry name" value="gatA"/>
    <property type="match status" value="1"/>
</dbReference>
<dbReference type="PANTHER" id="PTHR11895:SF151">
    <property type="entry name" value="GLUTAMYL-TRNA(GLN) AMIDOTRANSFERASE SUBUNIT A"/>
    <property type="match status" value="1"/>
</dbReference>
<dbReference type="PANTHER" id="PTHR11895">
    <property type="entry name" value="TRANSAMIDASE"/>
    <property type="match status" value="1"/>
</dbReference>
<dbReference type="Pfam" id="PF01425">
    <property type="entry name" value="Amidase"/>
    <property type="match status" value="1"/>
</dbReference>
<dbReference type="SUPFAM" id="SSF75304">
    <property type="entry name" value="Amidase signature (AS) enzymes"/>
    <property type="match status" value="1"/>
</dbReference>
<dbReference type="PROSITE" id="PS00571">
    <property type="entry name" value="AMIDASES"/>
    <property type="match status" value="1"/>
</dbReference>
<organism>
    <name type="scientific">Exiguobacterium sp. (strain ATCC BAA-1283 / AT1b)</name>
    <dbReference type="NCBI Taxonomy" id="360911"/>
    <lineage>
        <taxon>Bacteria</taxon>
        <taxon>Bacillati</taxon>
        <taxon>Bacillota</taxon>
        <taxon>Bacilli</taxon>
        <taxon>Bacillales</taxon>
        <taxon>Bacillales Family XII. Incertae Sedis</taxon>
        <taxon>Exiguobacterium</taxon>
    </lineage>
</organism>
<feature type="chain" id="PRO_1000203036" description="Glutamyl-tRNA(Gln) amidotransferase subunit A">
    <location>
        <begin position="1"/>
        <end position="480"/>
    </location>
</feature>
<feature type="active site" description="Charge relay system" evidence="1">
    <location>
        <position position="76"/>
    </location>
</feature>
<feature type="active site" description="Charge relay system" evidence="1">
    <location>
        <position position="151"/>
    </location>
</feature>
<feature type="active site" description="Acyl-ester intermediate" evidence="1">
    <location>
        <position position="175"/>
    </location>
</feature>